<name>BYST_ARATH</name>
<evidence type="ECO:0000256" key="1">
    <source>
        <dbReference type="SAM" id="MobiDB-lite"/>
    </source>
</evidence>
<evidence type="ECO:0000269" key="2">
    <source>
    </source>
</evidence>
<evidence type="ECO:0000303" key="3">
    <source>
    </source>
</evidence>
<evidence type="ECO:0000305" key="4"/>
<evidence type="ECO:0000312" key="5">
    <source>
        <dbReference type="Araport" id="AT1G31660"/>
    </source>
</evidence>
<evidence type="ECO:0000312" key="6">
    <source>
        <dbReference type="EMBL" id="AAG60158.1"/>
    </source>
</evidence>
<gene>
    <name evidence="3" type="primary">ENP1</name>
    <name evidence="5" type="ordered locus">At1g31660</name>
    <name evidence="6" type="ORF">F27M3.14</name>
</gene>
<keyword id="KW-0539">Nucleus</keyword>
<keyword id="KW-1185">Reference proteome</keyword>
<keyword id="KW-0690">Ribosome biogenesis</keyword>
<keyword id="KW-0698">rRNA processing</keyword>
<comment type="function">
    <text evidence="2">Essential protein required during embryogenesis and pollen development (PubMed:23382868). Required for processing of 20S pre-rRNA precursor and biogenesis of 40S ribosomal subunits (PubMed:23382868).</text>
</comment>
<comment type="subunit">
    <text evidence="2">Component of the 40S pre-ribosome.</text>
</comment>
<comment type="subcellular location">
    <subcellularLocation>
        <location evidence="2">Nucleus</location>
        <location evidence="2">Nucleolus</location>
    </subcellularLocation>
    <subcellularLocation>
        <location evidence="2">Nucleus</location>
        <location evidence="2">Nucleoplasm</location>
    </subcellularLocation>
</comment>
<comment type="tissue specificity">
    <text evidence="2">Highly expressed in flowers and at lower levels in roots, hypocotyls, stems, leaves, siliques and seeds.</text>
</comment>
<comment type="disruption phenotype">
    <text evidence="2">Delayed pollen development with reduced nuclei content leading to reduced pollen germination capacity, and pale seeds with arrested embryo development at the globular stage in homozygous plants (PubMed:23382868). In heterozygous plants, slight accumulation of the 23S-like precursor P-A3 (PubMed:23382868). Reduced siliques size with small non-developed and early aborted seeds (PubMed:23382868).</text>
</comment>
<comment type="similarity">
    <text evidence="4">Belongs to the bystin family.</text>
</comment>
<comment type="sequence caution" evidence="4">
    <conflict type="erroneous gene model prediction">
        <sequence resource="EMBL-CDS" id="AAG60158"/>
    </conflict>
</comment>
<sequence>MAKKRDRIVNTQPFISDDASVASSRKRSKVPKTHQKQEKLIEAGMSEKIMKQALAQQKEVADEENAERNPSSAAFAVAGAATAGEEQKILEEEEDDIDDFDGTFENQSQFDKQEEINEDDEKLFESFLNKNAPPQRTLTDIIIKKLKDKDADLAEEERPDPKMDPAITKLYKGVGKFMSEYTVGKLPKAFKLVTSMEHWEDVLYLTEPEKWSPNALYQATRIFASNLKDRQVQRFYNYVLLPRVREDIRKHKKLHFALYQALKKSLYKPSAFNQGILFPLCKSGTCNLREAVIIGSILEKCSIPMLHSCVALNRLAEMDYCGTTSYFIKVLLEKKYCMPYRVLDALVAHFMRFVDDIRVMPVIWHQSLLTFVQRYKYEILKEDKEHLQTLLQRQKHHLVTPEILRELKDSRNRGEKEDPMVDNFAPVPAKEDRFDIPEVPMEED</sequence>
<reference key="1">
    <citation type="journal article" date="2000" name="Nature">
        <title>Sequence and analysis of chromosome 1 of the plant Arabidopsis thaliana.</title>
        <authorList>
            <person name="Theologis A."/>
            <person name="Ecker J.R."/>
            <person name="Palm C.J."/>
            <person name="Federspiel N.A."/>
            <person name="Kaul S."/>
            <person name="White O."/>
            <person name="Alonso J."/>
            <person name="Altafi H."/>
            <person name="Araujo R."/>
            <person name="Bowman C.L."/>
            <person name="Brooks S.Y."/>
            <person name="Buehler E."/>
            <person name="Chan A."/>
            <person name="Chao Q."/>
            <person name="Chen H."/>
            <person name="Cheuk R.F."/>
            <person name="Chin C.W."/>
            <person name="Chung M.K."/>
            <person name="Conn L."/>
            <person name="Conway A.B."/>
            <person name="Conway A.R."/>
            <person name="Creasy T.H."/>
            <person name="Dewar K."/>
            <person name="Dunn P."/>
            <person name="Etgu P."/>
            <person name="Feldblyum T.V."/>
            <person name="Feng J.-D."/>
            <person name="Fong B."/>
            <person name="Fujii C.Y."/>
            <person name="Gill J.E."/>
            <person name="Goldsmith A.D."/>
            <person name="Haas B."/>
            <person name="Hansen N.F."/>
            <person name="Hughes B."/>
            <person name="Huizar L."/>
            <person name="Hunter J.L."/>
            <person name="Jenkins J."/>
            <person name="Johnson-Hopson C."/>
            <person name="Khan S."/>
            <person name="Khaykin E."/>
            <person name="Kim C.J."/>
            <person name="Koo H.L."/>
            <person name="Kremenetskaia I."/>
            <person name="Kurtz D.B."/>
            <person name="Kwan A."/>
            <person name="Lam B."/>
            <person name="Langin-Hooper S."/>
            <person name="Lee A."/>
            <person name="Lee J.M."/>
            <person name="Lenz C.A."/>
            <person name="Li J.H."/>
            <person name="Li Y.-P."/>
            <person name="Lin X."/>
            <person name="Liu S.X."/>
            <person name="Liu Z.A."/>
            <person name="Luros J.S."/>
            <person name="Maiti R."/>
            <person name="Marziali A."/>
            <person name="Militscher J."/>
            <person name="Miranda M."/>
            <person name="Nguyen M."/>
            <person name="Nierman W.C."/>
            <person name="Osborne B.I."/>
            <person name="Pai G."/>
            <person name="Peterson J."/>
            <person name="Pham P.K."/>
            <person name="Rizzo M."/>
            <person name="Rooney T."/>
            <person name="Rowley D."/>
            <person name="Sakano H."/>
            <person name="Salzberg S.L."/>
            <person name="Schwartz J.R."/>
            <person name="Shinn P."/>
            <person name="Southwick A.M."/>
            <person name="Sun H."/>
            <person name="Tallon L.J."/>
            <person name="Tambunga G."/>
            <person name="Toriumi M.J."/>
            <person name="Town C.D."/>
            <person name="Utterback T."/>
            <person name="Van Aken S."/>
            <person name="Vaysberg M."/>
            <person name="Vysotskaia V.S."/>
            <person name="Walker M."/>
            <person name="Wu D."/>
            <person name="Yu G."/>
            <person name="Fraser C.M."/>
            <person name="Venter J.C."/>
            <person name="Davis R.W."/>
        </authorList>
    </citation>
    <scope>NUCLEOTIDE SEQUENCE [LARGE SCALE GENOMIC DNA]</scope>
    <source>
        <strain>cv. Columbia</strain>
    </source>
</reference>
<reference key="2">
    <citation type="journal article" date="2017" name="Plant J.">
        <title>Araport11: a complete reannotation of the Arabidopsis thaliana reference genome.</title>
        <authorList>
            <person name="Cheng C.Y."/>
            <person name="Krishnakumar V."/>
            <person name="Chan A.P."/>
            <person name="Thibaud-Nissen F."/>
            <person name="Schobel S."/>
            <person name="Town C.D."/>
        </authorList>
    </citation>
    <scope>GENOME REANNOTATION</scope>
    <source>
        <strain>cv. Columbia</strain>
    </source>
</reference>
<reference key="3">
    <citation type="journal article" date="2003" name="Science">
        <title>Empirical analysis of transcriptional activity in the Arabidopsis genome.</title>
        <authorList>
            <person name="Yamada K."/>
            <person name="Lim J."/>
            <person name="Dale J.M."/>
            <person name="Chen H."/>
            <person name="Shinn P."/>
            <person name="Palm C.J."/>
            <person name="Southwick A.M."/>
            <person name="Wu H.C."/>
            <person name="Kim C.J."/>
            <person name="Nguyen M."/>
            <person name="Pham P.K."/>
            <person name="Cheuk R.F."/>
            <person name="Karlin-Newmann G."/>
            <person name="Liu S.X."/>
            <person name="Lam B."/>
            <person name="Sakano H."/>
            <person name="Wu T."/>
            <person name="Yu G."/>
            <person name="Miranda M."/>
            <person name="Quach H.L."/>
            <person name="Tripp M."/>
            <person name="Chang C.H."/>
            <person name="Lee J.M."/>
            <person name="Toriumi M.J."/>
            <person name="Chan M.M."/>
            <person name="Tang C.C."/>
            <person name="Onodera C.S."/>
            <person name="Deng J.M."/>
            <person name="Akiyama K."/>
            <person name="Ansari Y."/>
            <person name="Arakawa T."/>
            <person name="Banh J."/>
            <person name="Banno F."/>
            <person name="Bowser L."/>
            <person name="Brooks S.Y."/>
            <person name="Carninci P."/>
            <person name="Chao Q."/>
            <person name="Choy N."/>
            <person name="Enju A."/>
            <person name="Goldsmith A.D."/>
            <person name="Gurjal M."/>
            <person name="Hansen N.F."/>
            <person name="Hayashizaki Y."/>
            <person name="Johnson-Hopson C."/>
            <person name="Hsuan V.W."/>
            <person name="Iida K."/>
            <person name="Karnes M."/>
            <person name="Khan S."/>
            <person name="Koesema E."/>
            <person name="Ishida J."/>
            <person name="Jiang P.X."/>
            <person name="Jones T."/>
            <person name="Kawai J."/>
            <person name="Kamiya A."/>
            <person name="Meyers C."/>
            <person name="Nakajima M."/>
            <person name="Narusaka M."/>
            <person name="Seki M."/>
            <person name="Sakurai T."/>
            <person name="Satou M."/>
            <person name="Tamse R."/>
            <person name="Vaysberg M."/>
            <person name="Wallender E.K."/>
            <person name="Wong C."/>
            <person name="Yamamura Y."/>
            <person name="Yuan S."/>
            <person name="Shinozaki K."/>
            <person name="Davis R.W."/>
            <person name="Theologis A."/>
            <person name="Ecker J.R."/>
        </authorList>
    </citation>
    <scope>NUCLEOTIDE SEQUENCE [LARGE SCALE MRNA]</scope>
    <source>
        <strain>cv. Columbia</strain>
    </source>
</reference>
<reference key="4">
    <citation type="journal article" date="2013" name="PLoS ONE">
        <title>40S ribosome biogenesis co-factors are essential for gametophyte and embryo development.</title>
        <authorList>
            <person name="Missbach S."/>
            <person name="Weis B.L."/>
            <person name="Martin R."/>
            <person name="Simm S."/>
            <person name="Bohnsack M.T."/>
            <person name="Schleiff E."/>
        </authorList>
    </citation>
    <scope>FUNCTION</scope>
    <scope>DISRUPTION PHENOTYPE</scope>
    <scope>TISSUE SPECIFICITY</scope>
    <scope>SUBCELLULAR LOCATION</scope>
    <scope>SUBUNIT</scope>
    <source>
        <strain>cv. Columbia</strain>
    </source>
</reference>
<proteinExistence type="evidence at protein level"/>
<dbReference type="EMBL" id="AC074360">
    <property type="protein sequence ID" value="AAG60158.1"/>
    <property type="status" value="ALT_SEQ"/>
    <property type="molecule type" value="Genomic_DNA"/>
</dbReference>
<dbReference type="EMBL" id="CP002684">
    <property type="protein sequence ID" value="AEE31381.1"/>
    <property type="molecule type" value="Genomic_DNA"/>
</dbReference>
<dbReference type="EMBL" id="AY091144">
    <property type="protein sequence ID" value="AAM14093.1"/>
    <property type="molecule type" value="mRNA"/>
</dbReference>
<dbReference type="EMBL" id="BT003812">
    <property type="protein sequence ID" value="AAO41865.1"/>
    <property type="molecule type" value="mRNA"/>
</dbReference>
<dbReference type="RefSeq" id="NP_174447.2">
    <property type="nucleotide sequence ID" value="NM_102901.4"/>
</dbReference>
<dbReference type="SMR" id="Q8RWS4"/>
<dbReference type="FunCoup" id="Q8RWS4">
    <property type="interactions" value="2954"/>
</dbReference>
<dbReference type="STRING" id="3702.Q8RWS4"/>
<dbReference type="PaxDb" id="3702-AT1G31660.1"/>
<dbReference type="ProteomicsDB" id="179361"/>
<dbReference type="EnsemblPlants" id="AT1G31660.1">
    <property type="protein sequence ID" value="AT1G31660.1"/>
    <property type="gene ID" value="AT1G31660"/>
</dbReference>
<dbReference type="GeneID" id="840053"/>
<dbReference type="Gramene" id="AT1G31660.1">
    <property type="protein sequence ID" value="AT1G31660.1"/>
    <property type="gene ID" value="AT1G31660"/>
</dbReference>
<dbReference type="KEGG" id="ath:AT1G31660"/>
<dbReference type="Araport" id="AT1G31660"/>
<dbReference type="TAIR" id="AT1G31660">
    <property type="gene designation" value="ENP1"/>
</dbReference>
<dbReference type="eggNOG" id="KOG3871">
    <property type="taxonomic scope" value="Eukaryota"/>
</dbReference>
<dbReference type="HOGENOM" id="CLU_029727_0_1_1"/>
<dbReference type="InParanoid" id="Q8RWS4"/>
<dbReference type="OMA" id="TKLPVIW"/>
<dbReference type="PhylomeDB" id="Q8RWS4"/>
<dbReference type="CD-CODE" id="4299E36E">
    <property type="entry name" value="Nucleolus"/>
</dbReference>
<dbReference type="PRO" id="PR:Q8RWS4"/>
<dbReference type="Proteomes" id="UP000006548">
    <property type="component" value="Chromosome 1"/>
</dbReference>
<dbReference type="ExpressionAtlas" id="Q8RWS4">
    <property type="expression patterns" value="baseline and differential"/>
</dbReference>
<dbReference type="GO" id="GO:0005730">
    <property type="term" value="C:nucleolus"/>
    <property type="evidence" value="ECO:0000314"/>
    <property type="project" value="UniProtKB"/>
</dbReference>
<dbReference type="GO" id="GO:0005654">
    <property type="term" value="C:nucleoplasm"/>
    <property type="evidence" value="ECO:0000314"/>
    <property type="project" value="UniProtKB"/>
</dbReference>
<dbReference type="GO" id="GO:0009553">
    <property type="term" value="P:embryo sac development"/>
    <property type="evidence" value="ECO:0000315"/>
    <property type="project" value="TAIR"/>
</dbReference>
<dbReference type="GO" id="GO:0009555">
    <property type="term" value="P:pollen development"/>
    <property type="evidence" value="ECO:0000315"/>
    <property type="project" value="TAIR"/>
</dbReference>
<dbReference type="GO" id="GO:0006364">
    <property type="term" value="P:rRNA processing"/>
    <property type="evidence" value="ECO:0000315"/>
    <property type="project" value="TAIR"/>
</dbReference>
<dbReference type="FunFam" id="1.25.40.480:FF:000001">
    <property type="entry name" value="Bystin (51.6 kD)-like"/>
    <property type="match status" value="1"/>
</dbReference>
<dbReference type="Gene3D" id="1.25.40.480">
    <property type="match status" value="1"/>
</dbReference>
<dbReference type="InterPro" id="IPR007955">
    <property type="entry name" value="Bystin"/>
</dbReference>
<dbReference type="PANTHER" id="PTHR12821">
    <property type="entry name" value="BYSTIN"/>
    <property type="match status" value="1"/>
</dbReference>
<dbReference type="PANTHER" id="PTHR12821:SF0">
    <property type="entry name" value="BYSTIN"/>
    <property type="match status" value="1"/>
</dbReference>
<dbReference type="Pfam" id="PF05291">
    <property type="entry name" value="Bystin"/>
    <property type="match status" value="1"/>
</dbReference>
<protein>
    <recommendedName>
        <fullName evidence="4">Bystin</fullName>
    </recommendedName>
    <alternativeName>
        <fullName evidence="3">Essential nuclear protein 1</fullName>
        <shortName evidence="3">AtEnp1</shortName>
    </alternativeName>
</protein>
<organism>
    <name type="scientific">Arabidopsis thaliana</name>
    <name type="common">Mouse-ear cress</name>
    <dbReference type="NCBI Taxonomy" id="3702"/>
    <lineage>
        <taxon>Eukaryota</taxon>
        <taxon>Viridiplantae</taxon>
        <taxon>Streptophyta</taxon>
        <taxon>Embryophyta</taxon>
        <taxon>Tracheophyta</taxon>
        <taxon>Spermatophyta</taxon>
        <taxon>Magnoliopsida</taxon>
        <taxon>eudicotyledons</taxon>
        <taxon>Gunneridae</taxon>
        <taxon>Pentapetalae</taxon>
        <taxon>rosids</taxon>
        <taxon>malvids</taxon>
        <taxon>Brassicales</taxon>
        <taxon>Brassicaceae</taxon>
        <taxon>Camelineae</taxon>
        <taxon>Arabidopsis</taxon>
    </lineage>
</organism>
<accession>Q8RWS4</accession>
<accession>Q9C6V6</accession>
<feature type="chain" id="PRO_0000448722" description="Bystin">
    <location>
        <begin position="1"/>
        <end position="444"/>
    </location>
</feature>
<feature type="region of interest" description="Disordered" evidence="1">
    <location>
        <begin position="1"/>
        <end position="37"/>
    </location>
</feature>
<feature type="region of interest" description="Disordered" evidence="1">
    <location>
        <begin position="53"/>
        <end position="85"/>
    </location>
</feature>
<feature type="compositionally biased region" description="Basic residues" evidence="1">
    <location>
        <begin position="24"/>
        <end position="34"/>
    </location>
</feature>
<feature type="compositionally biased region" description="Low complexity" evidence="1">
    <location>
        <begin position="73"/>
        <end position="84"/>
    </location>
</feature>